<sequence>MNTQPLRVGIGGPVGSGKTALTLALCQALRDRYNLAVVTNDIYTQEDAQFLVRNEALAPERIIGVETGGCPHTAIREDASINLEAVEQLNRRFPGLDLIIVESGGDNLSATFSPELSDLTIYVIDVSAGDKLPRKGGPGICKSDLLVINKIDLAPMVGASLEVMDRDARKMRGERPFVFSNQKVGQGLEEIISFIEKQGMLSAA</sequence>
<gene>
    <name evidence="1" type="primary">ureG</name>
    <name type="ordered locus">PST_3738</name>
</gene>
<keyword id="KW-0143">Chaperone</keyword>
<keyword id="KW-0963">Cytoplasm</keyword>
<keyword id="KW-0342">GTP-binding</keyword>
<keyword id="KW-0996">Nickel insertion</keyword>
<keyword id="KW-0547">Nucleotide-binding</keyword>
<keyword id="KW-1185">Reference proteome</keyword>
<proteinExistence type="inferred from homology"/>
<evidence type="ECO:0000255" key="1">
    <source>
        <dbReference type="HAMAP-Rule" id="MF_01389"/>
    </source>
</evidence>
<organism>
    <name type="scientific">Stutzerimonas stutzeri (strain A1501)</name>
    <name type="common">Pseudomonas stutzeri</name>
    <dbReference type="NCBI Taxonomy" id="379731"/>
    <lineage>
        <taxon>Bacteria</taxon>
        <taxon>Pseudomonadati</taxon>
        <taxon>Pseudomonadota</taxon>
        <taxon>Gammaproteobacteria</taxon>
        <taxon>Pseudomonadales</taxon>
        <taxon>Pseudomonadaceae</taxon>
        <taxon>Stutzerimonas</taxon>
    </lineage>
</organism>
<feature type="chain" id="PRO_0000347429" description="Urease accessory protein UreG">
    <location>
        <begin position="1"/>
        <end position="204"/>
    </location>
</feature>
<feature type="binding site" evidence="1">
    <location>
        <begin position="12"/>
        <end position="19"/>
    </location>
    <ligand>
        <name>GTP</name>
        <dbReference type="ChEBI" id="CHEBI:37565"/>
    </ligand>
</feature>
<reference key="1">
    <citation type="journal article" date="2008" name="Proc. Natl. Acad. Sci. U.S.A.">
        <title>Nitrogen fixation island and rhizosphere competence traits in the genome of root-associated Pseudomonas stutzeri A1501.</title>
        <authorList>
            <person name="Yan Y."/>
            <person name="Yang J."/>
            <person name="Dou Y."/>
            <person name="Chen M."/>
            <person name="Ping S."/>
            <person name="Peng J."/>
            <person name="Lu W."/>
            <person name="Zhang W."/>
            <person name="Yao Z."/>
            <person name="Li H."/>
            <person name="Liu W."/>
            <person name="He S."/>
            <person name="Geng L."/>
            <person name="Zhang X."/>
            <person name="Yang F."/>
            <person name="Yu H."/>
            <person name="Zhan Y."/>
            <person name="Li D."/>
            <person name="Lin Z."/>
            <person name="Wang Y."/>
            <person name="Elmerich C."/>
            <person name="Lin M."/>
            <person name="Jin Q."/>
        </authorList>
    </citation>
    <scope>NUCLEOTIDE SEQUENCE [LARGE SCALE GENOMIC DNA]</scope>
    <source>
        <strain>A1501</strain>
    </source>
</reference>
<dbReference type="EMBL" id="CP000304">
    <property type="protein sequence ID" value="ABP81361.1"/>
    <property type="molecule type" value="Genomic_DNA"/>
</dbReference>
<dbReference type="RefSeq" id="WP_003283012.1">
    <property type="nucleotide sequence ID" value="NC_009434.1"/>
</dbReference>
<dbReference type="SMR" id="A4VQW0"/>
<dbReference type="KEGG" id="psa:PST_3738"/>
<dbReference type="eggNOG" id="COG0378">
    <property type="taxonomic scope" value="Bacteria"/>
</dbReference>
<dbReference type="HOGENOM" id="CLU_072144_1_0_6"/>
<dbReference type="Proteomes" id="UP000000233">
    <property type="component" value="Chromosome"/>
</dbReference>
<dbReference type="GO" id="GO:0005737">
    <property type="term" value="C:cytoplasm"/>
    <property type="evidence" value="ECO:0007669"/>
    <property type="project" value="UniProtKB-SubCell"/>
</dbReference>
<dbReference type="GO" id="GO:0005525">
    <property type="term" value="F:GTP binding"/>
    <property type="evidence" value="ECO:0007669"/>
    <property type="project" value="UniProtKB-KW"/>
</dbReference>
<dbReference type="GO" id="GO:0003924">
    <property type="term" value="F:GTPase activity"/>
    <property type="evidence" value="ECO:0007669"/>
    <property type="project" value="InterPro"/>
</dbReference>
<dbReference type="GO" id="GO:0016151">
    <property type="term" value="F:nickel cation binding"/>
    <property type="evidence" value="ECO:0007669"/>
    <property type="project" value="UniProtKB-UniRule"/>
</dbReference>
<dbReference type="GO" id="GO:0043419">
    <property type="term" value="P:urea catabolic process"/>
    <property type="evidence" value="ECO:0007669"/>
    <property type="project" value="InterPro"/>
</dbReference>
<dbReference type="CDD" id="cd05540">
    <property type="entry name" value="UreG"/>
    <property type="match status" value="1"/>
</dbReference>
<dbReference type="FunFam" id="3.40.50.300:FF:000208">
    <property type="entry name" value="Urease accessory protein UreG"/>
    <property type="match status" value="1"/>
</dbReference>
<dbReference type="Gene3D" id="3.40.50.300">
    <property type="entry name" value="P-loop containing nucleotide triphosphate hydrolases"/>
    <property type="match status" value="1"/>
</dbReference>
<dbReference type="HAMAP" id="MF_01389">
    <property type="entry name" value="UreG"/>
    <property type="match status" value="1"/>
</dbReference>
<dbReference type="InterPro" id="IPR003495">
    <property type="entry name" value="CobW/HypB/UreG_nucleotide-bd"/>
</dbReference>
<dbReference type="InterPro" id="IPR027417">
    <property type="entry name" value="P-loop_NTPase"/>
</dbReference>
<dbReference type="InterPro" id="IPR004400">
    <property type="entry name" value="UreG"/>
</dbReference>
<dbReference type="NCBIfam" id="TIGR00101">
    <property type="entry name" value="ureG"/>
    <property type="match status" value="1"/>
</dbReference>
<dbReference type="PANTHER" id="PTHR31715">
    <property type="entry name" value="UREASE ACCESSORY PROTEIN G"/>
    <property type="match status" value="1"/>
</dbReference>
<dbReference type="PANTHER" id="PTHR31715:SF0">
    <property type="entry name" value="UREASE ACCESSORY PROTEIN G"/>
    <property type="match status" value="1"/>
</dbReference>
<dbReference type="Pfam" id="PF02492">
    <property type="entry name" value="cobW"/>
    <property type="match status" value="1"/>
</dbReference>
<dbReference type="PIRSF" id="PIRSF005624">
    <property type="entry name" value="Ni-bind_GTPase"/>
    <property type="match status" value="1"/>
</dbReference>
<dbReference type="SUPFAM" id="SSF52540">
    <property type="entry name" value="P-loop containing nucleoside triphosphate hydrolases"/>
    <property type="match status" value="1"/>
</dbReference>
<comment type="function">
    <text evidence="1">Facilitates the functional incorporation of the urease nickel metallocenter. This process requires GTP hydrolysis, probably effectuated by UreG.</text>
</comment>
<comment type="subunit">
    <text evidence="1">Homodimer. UreD, UreF and UreG form a complex that acts as a GTP-hydrolysis-dependent molecular chaperone, activating the urease apoprotein by helping to assemble the nickel containing metallocenter of UreC. The UreE protein probably delivers the nickel.</text>
</comment>
<comment type="subcellular location">
    <subcellularLocation>
        <location evidence="1">Cytoplasm</location>
    </subcellularLocation>
</comment>
<comment type="similarity">
    <text evidence="1">Belongs to the SIMIBI class G3E GTPase family. UreG subfamily.</text>
</comment>
<accession>A4VQW0</accession>
<name>UREG_STUS1</name>
<protein>
    <recommendedName>
        <fullName evidence="1">Urease accessory protein UreG</fullName>
    </recommendedName>
</protein>